<reference key="1">
    <citation type="journal article" date="2006" name="Mol. Microbiol.">
        <title>Role of pathogenicity island-associated integrases in the genome plasticity of uropathogenic Escherichia coli strain 536.</title>
        <authorList>
            <person name="Hochhut B."/>
            <person name="Wilde C."/>
            <person name="Balling G."/>
            <person name="Middendorf B."/>
            <person name="Dobrindt U."/>
            <person name="Brzuszkiewicz E."/>
            <person name="Gottschalk G."/>
            <person name="Carniel E."/>
            <person name="Hacker J."/>
        </authorList>
    </citation>
    <scope>NUCLEOTIDE SEQUENCE [LARGE SCALE GENOMIC DNA]</scope>
    <source>
        <strain>536 / UPEC</strain>
    </source>
</reference>
<organism>
    <name type="scientific">Escherichia coli O6:K15:H31 (strain 536 / UPEC)</name>
    <dbReference type="NCBI Taxonomy" id="362663"/>
    <lineage>
        <taxon>Bacteria</taxon>
        <taxon>Pseudomonadati</taxon>
        <taxon>Pseudomonadota</taxon>
        <taxon>Gammaproteobacteria</taxon>
        <taxon>Enterobacterales</taxon>
        <taxon>Enterobacteriaceae</taxon>
        <taxon>Escherichia</taxon>
    </lineage>
</organism>
<name>FOLM_ECOL5</name>
<accession>Q0THM2</accession>
<evidence type="ECO:0000250" key="1">
    <source>
        <dbReference type="UniProtKB" id="P0AFS3"/>
    </source>
</evidence>
<evidence type="ECO:0000255" key="2">
    <source>
        <dbReference type="PROSITE-ProRule" id="PRU10001"/>
    </source>
</evidence>
<evidence type="ECO:0000305" key="3"/>
<protein>
    <recommendedName>
        <fullName>Dihydromonapterin reductase</fullName>
        <shortName>H(2)-MPt reductase</shortName>
        <ecNumber evidence="1">1.5.1.50</ecNumber>
    </recommendedName>
    <alternativeName>
        <fullName>Dihydrofolate reductase</fullName>
        <shortName>DHFR</shortName>
        <ecNumber evidence="1">1.5.1.3</ecNumber>
    </alternativeName>
</protein>
<sequence>MGKTQPLPILITGGGRRIGLALAWHFINQKQPVIVSYRTHYPAIDGLIKAGAQCIQADFSTNDGVMAFADEVLKSTHGLRAILHNASAWMAEKPGAPLTDVLACMMQIHVNTPYLLNHALERLLRGHGHAASDIIHFTDYVVERGSDKHIAYAASKAALDNMTRSFARKLAPEVKVNSIAPSLILFNEHDDAEYRQQALNKSLMKTAPGEKEVIDLVDYLLTSCFVTGRSLPLDGGRHLR</sequence>
<proteinExistence type="inferred from homology"/>
<gene>
    <name type="primary">folM</name>
    <name type="ordered locus">ECP_1550</name>
</gene>
<feature type="chain" id="PRO_0000339396" description="Dihydromonapterin reductase">
    <location>
        <begin position="1"/>
        <end position="240"/>
    </location>
</feature>
<feature type="active site" description="Proton acceptor" evidence="2">
    <location>
        <position position="152"/>
    </location>
</feature>
<keyword id="KW-0521">NADP</keyword>
<keyword id="KW-0554">One-carbon metabolism</keyword>
<keyword id="KW-0560">Oxidoreductase</keyword>
<comment type="function">
    <text evidence="1">Catalyzes the reduction of dihydromonapterin to tetrahydromonapterin. Also has lower activity with dihydrofolate.</text>
</comment>
<comment type="catalytic activity">
    <reaction evidence="1">
        <text>(6S)-5,6,7,8-tetrahydrofolate + NADP(+) = 7,8-dihydrofolate + NADPH + H(+)</text>
        <dbReference type="Rhea" id="RHEA:15009"/>
        <dbReference type="ChEBI" id="CHEBI:15378"/>
        <dbReference type="ChEBI" id="CHEBI:57451"/>
        <dbReference type="ChEBI" id="CHEBI:57453"/>
        <dbReference type="ChEBI" id="CHEBI:57783"/>
        <dbReference type="ChEBI" id="CHEBI:58349"/>
        <dbReference type="EC" id="1.5.1.3"/>
    </reaction>
</comment>
<comment type="catalytic activity">
    <reaction evidence="1">
        <text>7,8-dihydromonapterin + NADPH + H(+) = 5,6,7,8-tetrahydromonapterin + NADP(+)</text>
        <dbReference type="Rhea" id="RHEA:34847"/>
        <dbReference type="ChEBI" id="CHEBI:15378"/>
        <dbReference type="ChEBI" id="CHEBI:57783"/>
        <dbReference type="ChEBI" id="CHEBI:58349"/>
        <dbReference type="ChEBI" id="CHEBI:71175"/>
        <dbReference type="ChEBI" id="CHEBI:71177"/>
        <dbReference type="EC" id="1.5.1.50"/>
    </reaction>
</comment>
<comment type="similarity">
    <text evidence="3">Belongs to the short-chain dehydrogenases/reductases (SDR) family. FolM subfamily.</text>
</comment>
<dbReference type="EC" id="1.5.1.50" evidence="1"/>
<dbReference type="EC" id="1.5.1.3" evidence="1"/>
<dbReference type="EMBL" id="CP000247">
    <property type="protein sequence ID" value="ABG69557.1"/>
    <property type="molecule type" value="Genomic_DNA"/>
</dbReference>
<dbReference type="RefSeq" id="WP_000520799.1">
    <property type="nucleotide sequence ID" value="NC_008253.1"/>
</dbReference>
<dbReference type="SMR" id="Q0THM2"/>
<dbReference type="KEGG" id="ecp:ECP_1550"/>
<dbReference type="HOGENOM" id="CLU_010194_1_3_6"/>
<dbReference type="Proteomes" id="UP000009182">
    <property type="component" value="Chromosome"/>
</dbReference>
<dbReference type="GO" id="GO:0004146">
    <property type="term" value="F:dihydrofolate reductase activity"/>
    <property type="evidence" value="ECO:0007669"/>
    <property type="project" value="UniProtKB-EC"/>
</dbReference>
<dbReference type="GO" id="GO:0006730">
    <property type="term" value="P:one-carbon metabolic process"/>
    <property type="evidence" value="ECO:0007669"/>
    <property type="project" value="UniProtKB-KW"/>
</dbReference>
<dbReference type="CDD" id="cd05357">
    <property type="entry name" value="PR_SDR_c"/>
    <property type="match status" value="1"/>
</dbReference>
<dbReference type="FunFam" id="3.40.50.720:FF:000225">
    <property type="entry name" value="Dihydrofolate reductase FolM"/>
    <property type="match status" value="1"/>
</dbReference>
<dbReference type="Gene3D" id="3.40.50.720">
    <property type="entry name" value="NAD(P)-binding Rossmann-like Domain"/>
    <property type="match status" value="1"/>
</dbReference>
<dbReference type="InterPro" id="IPR036291">
    <property type="entry name" value="NAD(P)-bd_dom_sf"/>
</dbReference>
<dbReference type="InterPro" id="IPR020904">
    <property type="entry name" value="Sc_DH/Rdtase_CS"/>
</dbReference>
<dbReference type="InterPro" id="IPR002347">
    <property type="entry name" value="SDR_fam"/>
</dbReference>
<dbReference type="NCBIfam" id="NF005066">
    <property type="entry name" value="PRK06483.1"/>
    <property type="match status" value="1"/>
</dbReference>
<dbReference type="PANTHER" id="PTHR43639:SF6">
    <property type="entry name" value="DIHYDROMONAPTERIN REDUCTASE"/>
    <property type="match status" value="1"/>
</dbReference>
<dbReference type="PANTHER" id="PTHR43639">
    <property type="entry name" value="OXIDOREDUCTASE, SHORT-CHAIN DEHYDROGENASE/REDUCTASE FAMILY (AFU_ORTHOLOGUE AFUA_5G02870)"/>
    <property type="match status" value="1"/>
</dbReference>
<dbReference type="Pfam" id="PF13561">
    <property type="entry name" value="adh_short_C2"/>
    <property type="match status" value="1"/>
</dbReference>
<dbReference type="PRINTS" id="PR00081">
    <property type="entry name" value="GDHRDH"/>
</dbReference>
<dbReference type="SUPFAM" id="SSF51735">
    <property type="entry name" value="NAD(P)-binding Rossmann-fold domains"/>
    <property type="match status" value="1"/>
</dbReference>
<dbReference type="PROSITE" id="PS00061">
    <property type="entry name" value="ADH_SHORT"/>
    <property type="match status" value="1"/>
</dbReference>